<dbReference type="GO" id="GO:0009534">
    <property type="term" value="C:chloroplast thylakoid"/>
    <property type="evidence" value="ECO:0007669"/>
    <property type="project" value="UniProtKB-SubCell"/>
</dbReference>
<protein>
    <recommendedName>
        <fullName>Unknown protein from spot 105 of 2D-PAGE of thylakoid</fullName>
    </recommendedName>
</protein>
<proteinExistence type="evidence at protein level"/>
<name>UT105_PEA</name>
<keyword id="KW-0150">Chloroplast</keyword>
<keyword id="KW-0903">Direct protein sequencing</keyword>
<keyword id="KW-0934">Plastid</keyword>
<keyword id="KW-0793">Thylakoid</keyword>
<organism>
    <name type="scientific">Pisum sativum</name>
    <name type="common">Garden pea</name>
    <name type="synonym">Lathyrus oleraceus</name>
    <dbReference type="NCBI Taxonomy" id="3888"/>
    <lineage>
        <taxon>Eukaryota</taxon>
        <taxon>Viridiplantae</taxon>
        <taxon>Streptophyta</taxon>
        <taxon>Embryophyta</taxon>
        <taxon>Tracheophyta</taxon>
        <taxon>Spermatophyta</taxon>
        <taxon>Magnoliopsida</taxon>
        <taxon>eudicotyledons</taxon>
        <taxon>Gunneridae</taxon>
        <taxon>Pentapetalae</taxon>
        <taxon>rosids</taxon>
        <taxon>fabids</taxon>
        <taxon>Fabales</taxon>
        <taxon>Fabaceae</taxon>
        <taxon>Papilionoideae</taxon>
        <taxon>50 kb inversion clade</taxon>
        <taxon>NPAAA clade</taxon>
        <taxon>Hologalegina</taxon>
        <taxon>IRL clade</taxon>
        <taxon>Fabeae</taxon>
        <taxon>Pisum</taxon>
    </lineage>
</organism>
<sequence>SVVAAYMV</sequence>
<comment type="subcellular location">
    <subcellularLocation>
        <location evidence="1">Plastid</location>
        <location evidence="1">Chloroplast thylakoid</location>
    </subcellularLocation>
</comment>
<comment type="miscellaneous">
    <text evidence="1">On the 2D-gel the determined pI of this protein is: 6.7, its MW is: 16.8 kDa.</text>
</comment>
<accession>P82324</accession>
<feature type="chain" id="PRO_0000234468" description="Unknown protein from spot 105 of 2D-PAGE of thylakoid">
    <location>
        <begin position="1" status="less than"/>
        <end position="8" status="greater than"/>
    </location>
</feature>
<feature type="non-terminal residue" evidence="2">
    <location>
        <position position="1"/>
    </location>
</feature>
<feature type="non-terminal residue" evidence="2">
    <location>
        <position position="8"/>
    </location>
</feature>
<evidence type="ECO:0000269" key="1">
    <source>
    </source>
</evidence>
<evidence type="ECO:0000303" key="2">
    <source>
    </source>
</evidence>
<evidence type="ECO:0000305" key="3"/>
<reference evidence="3" key="1">
    <citation type="journal article" date="2000" name="Plant Cell">
        <title>Proteomics of the chloroplast: systematic identification and targeting analysis of lumenal and peripheral thylakoid proteins.</title>
        <authorList>
            <person name="Peltier J.-B."/>
            <person name="Friso G."/>
            <person name="Kalume D.E."/>
            <person name="Roepstorff P."/>
            <person name="Nilsson F."/>
            <person name="Adamska I."/>
            <person name="van Wijk K.J."/>
        </authorList>
    </citation>
    <scope>PROTEIN SEQUENCE</scope>
    <scope>SUBCELLULAR LOCATION</scope>
    <source>
        <strain evidence="1">cv. De Grace</strain>
        <tissue evidence="1">Leaf</tissue>
    </source>
</reference>